<proteinExistence type="evidence at protein level"/>
<reference key="1">
    <citation type="journal article" date="1988" name="J. Gen. Virol.">
        <title>Typing hepatitis B virus by homology in nucleotide sequence: comparison of surface antigen subtypes.</title>
        <authorList>
            <person name="Okamoto H."/>
            <person name="Tsuda F."/>
            <person name="Sakugawa H."/>
            <person name="Sastrosoewignjo R.I."/>
            <person name="Imai M."/>
            <person name="Miyakawa Y."/>
            <person name="Mayumi M."/>
        </authorList>
    </citation>
    <scope>NUCLEOTIDE SEQUENCE [GENOMIC DNA]</scope>
</reference>
<reference key="2">
    <citation type="journal article" date="1996" name="Intervirology">
        <title>Functions of the large hepatitis B virus surface protein in viral particle morphogenesis.</title>
        <authorList>
            <person name="Bruss V."/>
            <person name="Gerhardt E."/>
            <person name="Vieluf K."/>
            <person name="Wunderlich G."/>
        </authorList>
    </citation>
    <scope>REVIEW</scope>
</reference>
<reference key="3">
    <citation type="journal article" date="1998" name="Adv. Exp. Med. Biol.">
        <title>Role of glycan processing in hepatitis B virus envelope protein trafficking.</title>
        <authorList>
            <person name="Block T.M."/>
            <person name="Lu X."/>
            <person name="Mehta A."/>
            <person name="Park J."/>
            <person name="Blumberg B.S."/>
            <person name="Dwek R."/>
        </authorList>
    </citation>
    <scope>REVIEW</scope>
</reference>
<reference key="4">
    <citation type="journal article" date="2004" name="Virus Res.">
        <title>Envelopment of the hepatitis B virus nucleocapsid.</title>
        <authorList>
            <person name="Bruss V."/>
        </authorList>
    </citation>
    <scope>REVIEW</scope>
</reference>
<reference key="5">
    <citation type="journal article" date="2006" name="Cancer Sci.">
        <title>Hepatitis B virus pre-S mutants, endoplasmic reticulum stress and hepatocarcinogenesis.</title>
        <authorList>
            <person name="Wang H.C."/>
            <person name="Huang W."/>
            <person name="Lai M.D."/>
            <person name="Su I.J."/>
        </authorList>
    </citation>
    <scope>REVIEW</scope>
</reference>
<organismHost>
    <name type="scientific">Homo sapiens</name>
    <name type="common">Human</name>
    <dbReference type="NCBI Taxonomy" id="9606"/>
</organismHost>
<organismHost>
    <name type="scientific">Pan troglodytes</name>
    <name type="common">Chimpanzee</name>
    <dbReference type="NCBI Taxonomy" id="9598"/>
</organismHost>
<accession>Q9QMI0</accession>
<dbReference type="EMBL" id="AB033558">
    <property type="protein sequence ID" value="BAA85374.1"/>
    <property type="molecule type" value="Genomic_DNA"/>
</dbReference>
<dbReference type="PIR" id="JQ1572">
    <property type="entry name" value="JQ1572"/>
</dbReference>
<dbReference type="PIR" id="JQ2063">
    <property type="entry name" value="JQ2063"/>
</dbReference>
<dbReference type="PIR" id="JQ2066">
    <property type="entry name" value="JQ2066"/>
</dbReference>
<dbReference type="PIR" id="JQ2067">
    <property type="entry name" value="JQ2067"/>
</dbReference>
<dbReference type="PIR" id="JQ2068">
    <property type="entry name" value="JQ2068"/>
</dbReference>
<dbReference type="PIR" id="JQ2069">
    <property type="entry name" value="JQ2069"/>
</dbReference>
<dbReference type="PIR" id="JQ2070">
    <property type="entry name" value="JQ2070"/>
</dbReference>
<dbReference type="PIR" id="JQ2072">
    <property type="entry name" value="JQ2072"/>
</dbReference>
<dbReference type="PIR" id="JQ2076">
    <property type="entry name" value="JQ2076"/>
</dbReference>
<dbReference type="PIR" id="JQ2077">
    <property type="entry name" value="JQ2077"/>
</dbReference>
<dbReference type="PIR" id="JQ2079">
    <property type="entry name" value="JQ2079"/>
</dbReference>
<dbReference type="PIR" id="JQ2080">
    <property type="entry name" value="JQ2080"/>
</dbReference>
<dbReference type="PIR" id="JQ2081">
    <property type="entry name" value="JQ2081"/>
</dbReference>
<dbReference type="PIR" id="JQ2083">
    <property type="entry name" value="JQ2083"/>
</dbReference>
<dbReference type="SMR" id="Q9QMI0"/>
<dbReference type="GlyCosmos" id="Q9QMI0">
    <property type="glycosylation" value="1 site, No reported glycans"/>
</dbReference>
<dbReference type="Proteomes" id="UP000007931">
    <property type="component" value="Genome"/>
</dbReference>
<dbReference type="GO" id="GO:0016020">
    <property type="term" value="C:membrane"/>
    <property type="evidence" value="ECO:0007669"/>
    <property type="project" value="UniProtKB-UniRule"/>
</dbReference>
<dbReference type="GO" id="GO:0019031">
    <property type="term" value="C:viral envelope"/>
    <property type="evidence" value="ECO:0007669"/>
    <property type="project" value="UniProtKB-KW"/>
</dbReference>
<dbReference type="GO" id="GO:0055036">
    <property type="term" value="C:virion membrane"/>
    <property type="evidence" value="ECO:0007669"/>
    <property type="project" value="UniProtKB-SubCell"/>
</dbReference>
<dbReference type="GO" id="GO:0075513">
    <property type="term" value="P:caveolin-mediated endocytosis of virus by host cell"/>
    <property type="evidence" value="ECO:0007669"/>
    <property type="project" value="UniProtKB-KW"/>
</dbReference>
<dbReference type="GO" id="GO:0039654">
    <property type="term" value="P:fusion of virus membrane with host endosome membrane"/>
    <property type="evidence" value="ECO:0007669"/>
    <property type="project" value="UniProtKB-KW"/>
</dbReference>
<dbReference type="GO" id="GO:0019062">
    <property type="term" value="P:virion attachment to host cell"/>
    <property type="evidence" value="ECO:0007669"/>
    <property type="project" value="UniProtKB-UniRule"/>
</dbReference>
<dbReference type="HAMAP" id="MF_04075">
    <property type="entry name" value="HBV_HBSAG"/>
    <property type="match status" value="1"/>
</dbReference>
<dbReference type="InterPro" id="IPR000349">
    <property type="entry name" value="HBV_HBSAG"/>
</dbReference>
<dbReference type="Pfam" id="PF00695">
    <property type="entry name" value="vMSA"/>
    <property type="match status" value="1"/>
</dbReference>
<comment type="function">
    <text evidence="3">The large envelope protein exists in two topological conformations, one which is termed 'external' or Le-HBsAg and the other 'internal' or Li-HBsAg. In its external conformation the protein attaches the virus to cell receptors and thereby initiating infection. This interaction determines the species specificity and liver tropism. This attachment induces virion internalization predominantly through caveolin-mediated endocytosis. The large envelope protein also assures fusion between virion membrane and endosomal membrane. In its internal conformation the protein plays a role in virion morphogenesis and mediates the contact with the nucleocapsid like a matrix protein.</text>
</comment>
<comment type="function">
    <text evidence="3">The middle envelope protein plays an important role in the budding of the virion. It is involved in the induction of budding in a nucleocapsid independent way. In this process the majority of envelope proteins bud to form subviral lipoprotein particles of 22 nm of diameter that do not contain a nucleocapsid.</text>
</comment>
<comment type="subunit">
    <molecule>Isoform L</molecule>
    <text evidence="2">In its internal form (Li-HBsAg), interacts with the capsid protein and with the isoform S. Interacts with host chaperone CANX.</text>
</comment>
<comment type="subunit">
    <molecule>Isoform M</molecule>
    <text evidence="2">Associates with host chaperone CANX through its pre-S2 N glycan; this association may be essential for isoform M proper secretion.</text>
</comment>
<comment type="subunit">
    <molecule>Isoform S</molecule>
    <text evidence="2">Interacts with isoform L. Interacts with the antigens of satellite virus HDV (HDVAgs); this interaction is required for encapsidation of HDV genomic RNA.</text>
</comment>
<comment type="subcellular location">
    <subcellularLocation>
        <location evidence="3">Virion membrane</location>
    </subcellularLocation>
</comment>
<comment type="alternative products">
    <event type="alternative splicing"/>
    <event type="alternative initiation"/>
    <isoform>
        <id>Q9QMI0-1</id>
        <name>L</name>
        <name>Large envelope protein</name>
        <name>LHB</name>
        <name>L-HBsAg</name>
        <sequence type="displayed"/>
    </isoform>
    <isoform>
        <id>Q9QMI0-2</id>
        <name>M</name>
        <name>Middle envelope protein</name>
        <name>MHB</name>
        <name>M-HBsAg</name>
        <sequence type="described" ref="VSP_031407"/>
    </isoform>
    <isoform>
        <id>Q9QMI0-3</id>
        <name>S</name>
        <name>Small envelope protein</name>
        <name>SHB</name>
        <name>S-HBsAg</name>
        <sequence type="described" ref="VSP_031406"/>
    </isoform>
</comment>
<comment type="domain">
    <text evidence="3">The large envelope protein is synthesized with the pre-S region at the cytosolic side of the endoplasmic reticulum and, hence will be within the virion after budding. Therefore the pre-S region is not N-glycosylated. Later a post-translational translocation of N-terminal pre-S and TM1 domains occur in about 50% of proteins at the virion surface. These molecules change their topology by an unknown mechanism, resulting in exposure of pre-S region at virion surface. For isoform M in contrast, the pre-S2 region is translocated cotranslationally to the endoplasmic reticulum lumen and is N-glycosylated.</text>
</comment>
<comment type="PTM">
    <text evidence="3">Isoform M is N-terminally acetylated by host at a ratio of 90%, and N-glycosylated by host at the pre-S2 region.</text>
</comment>
<comment type="PTM">
    <text evidence="3">Myristoylated.</text>
</comment>
<comment type="biotechnology">
    <text>Systematic vaccination of individuals at risk of exposure to the virus has been the main method of controlling the morbidity and mortality associated with hepatitis B. The first hepatitis B vaccine was manufactured by the purification and inactivation of HBsAg obtained from the plasma of chronic hepatitis B virus carriers. The vaccine is now produced by recombinant DNA techniques and expression of the S isoform in yeast cells. The pre-S region do not seem to induce strong enough antigenic response.</text>
</comment>
<comment type="similarity">
    <text evidence="3">Belongs to the orthohepadnavirus major surface antigen family.</text>
</comment>
<protein>
    <recommendedName>
        <fullName evidence="3">Large envelope protein</fullName>
    </recommendedName>
    <alternativeName>
        <fullName evidence="3">L glycoprotein</fullName>
    </alternativeName>
    <alternativeName>
        <fullName evidence="3">L-HBsAg</fullName>
        <shortName evidence="3">LHB</shortName>
    </alternativeName>
    <alternativeName>
        <fullName evidence="3">Large S protein</fullName>
    </alternativeName>
    <alternativeName>
        <fullName evidence="3">Large surface protein</fullName>
    </alternativeName>
    <alternativeName>
        <fullName evidence="3">Major surface antigen</fullName>
    </alternativeName>
</protein>
<organism>
    <name type="scientific">Hepatitis B virus genotype D subtype ayw (isolate Japan/JYW796/1988)</name>
    <name type="common">HBV-D</name>
    <dbReference type="NCBI Taxonomy" id="489487"/>
    <lineage>
        <taxon>Viruses</taxon>
        <taxon>Riboviria</taxon>
        <taxon>Pararnavirae</taxon>
        <taxon>Artverviricota</taxon>
        <taxon>Revtraviricetes</taxon>
        <taxon>Blubervirales</taxon>
        <taxon>Hepadnaviridae</taxon>
        <taxon>Orthohepadnavirus</taxon>
        <taxon>Hepatitis B virus</taxon>
        <taxon>hepatitis B virus genotype D</taxon>
    </lineage>
</organism>
<evidence type="ECO:0000250" key="1">
    <source>
        <dbReference type="UniProtKB" id="P03138"/>
    </source>
</evidence>
<evidence type="ECO:0000250" key="2">
    <source>
        <dbReference type="UniProtKB" id="P03141"/>
    </source>
</evidence>
<evidence type="ECO:0000255" key="3">
    <source>
        <dbReference type="HAMAP-Rule" id="MF_04075"/>
    </source>
</evidence>
<evidence type="ECO:0000256" key="4">
    <source>
        <dbReference type="SAM" id="MobiDB-lite"/>
    </source>
</evidence>
<evidence type="ECO:0000305" key="5"/>
<sequence>MGQNLSTSNPLGFFPDHQLDPAFRANTRNPDWDFNPNKDTWPDANKVGAGAFGLGFTPPHGGLLGWSPQAQGILQTLPANPPPAATNRQSGRQPTPLSPPLRDAHPQAMQWTSTTFHQALQDPRVRGLYFPAGGSSSGTVNPVPTTASPILSIFSKIGDLAPNMENITSGFLGPLLVLQAGFFLLTRILTIPQSLDSWWTSLNFLGGTTVCLGQNSQSPTSNHSPTSCPPTCPGYRWMCLRRFIIFLFILLLCLIFLLVLLDYQGMLPVCPLIPGSSTTSTGPCRTCMTTAQGTSMYPSCCCTKPSDGNCTCIPIPSSWAFGKFLWEWASARFSWLSLLVPFVQWFAGLSPIVWLSVIWMMWYWGPSLYSILSPFLPLLPIFFCLWAYI</sequence>
<name>HBSAG_HBVD4</name>
<feature type="initiator methionine" description="Removed; by host" evidence="3">
    <location>
        <position position="1"/>
    </location>
</feature>
<feature type="chain" id="PRO_0000319085" description="Large envelope protein" evidence="3">
    <location>
        <begin position="2"/>
        <end position="389"/>
    </location>
</feature>
<feature type="topological domain" description="Intravirion; in internal conformation" evidence="3">
    <location>
        <begin position="2"/>
        <end position="242"/>
    </location>
</feature>
<feature type="topological domain" description="Virion surface; in external conformation" evidence="3">
    <location>
        <begin position="2"/>
        <end position="170"/>
    </location>
</feature>
<feature type="transmembrane region" description="Helical; Name=TM1; Note=In external conformation" evidence="3">
    <location>
        <begin position="171"/>
        <end position="191"/>
    </location>
</feature>
<feature type="topological domain" description="Intravirion; in external conformation" evidence="3">
    <location>
        <begin position="192"/>
        <end position="242"/>
    </location>
</feature>
<feature type="transmembrane region" description="Helical; Name=TM2" evidence="3">
    <location>
        <begin position="243"/>
        <end position="263"/>
    </location>
</feature>
<feature type="topological domain" description="Virion surface" evidence="3">
    <location>
        <begin position="264"/>
        <end position="337"/>
    </location>
</feature>
<feature type="transmembrane region" description="Helical" evidence="3">
    <location>
        <begin position="338"/>
        <end position="358"/>
    </location>
</feature>
<feature type="topological domain" description="Intravirion" evidence="3">
    <location>
        <begin position="359"/>
        <end position="364"/>
    </location>
</feature>
<feature type="transmembrane region" description="Helical; Name=TM3" evidence="3">
    <location>
        <begin position="365"/>
        <end position="387"/>
    </location>
</feature>
<feature type="topological domain" description="Virion surface" evidence="3">
    <location>
        <begin position="388"/>
        <end position="389"/>
    </location>
</feature>
<feature type="region of interest" description="Pre-S" evidence="3">
    <location>
        <begin position="2"/>
        <end position="163"/>
    </location>
</feature>
<feature type="region of interest" description="Pre-S1" evidence="3">
    <location>
        <begin position="2"/>
        <end position="108"/>
    </location>
</feature>
<feature type="region of interest" description="Disordered" evidence="4">
    <location>
        <begin position="76"/>
        <end position="103"/>
    </location>
</feature>
<feature type="region of interest" description="Pre-S2" evidence="3">
    <location>
        <begin position="109"/>
        <end position="163"/>
    </location>
</feature>
<feature type="compositionally biased region" description="Polar residues" evidence="4">
    <location>
        <begin position="86"/>
        <end position="95"/>
    </location>
</feature>
<feature type="lipid moiety-binding region" description="N-myristoyl glycine; by host" evidence="3">
    <location>
        <position position="2"/>
    </location>
</feature>
<feature type="glycosylation site" description="N-linked (GlcNAc...) asparagine; by host" evidence="3">
    <location>
        <position position="309"/>
    </location>
</feature>
<feature type="splice variant" id="VSP_031406" description="In isoform S." evidence="5">
    <location>
        <begin position="1"/>
        <end position="163"/>
    </location>
</feature>
<feature type="splice variant" id="VSP_031407" description="In isoform M." evidence="5">
    <location>
        <begin position="1"/>
        <end position="108"/>
    </location>
</feature>
<feature type="modified residue" description="N-acetylmethionine" evidence="1">
    <location sequence="Q9QMI0-2">
        <position position="1"/>
    </location>
</feature>
<gene>
    <name evidence="3" type="primary">S</name>
</gene>
<keyword id="KW-0007">Acetylation</keyword>
<keyword id="KW-0024">Alternative initiation</keyword>
<keyword id="KW-0025">Alternative splicing</keyword>
<keyword id="KW-1166">Caveolin-mediated endocytosis of virus by host</keyword>
<keyword id="KW-1170">Fusion of virus membrane with host endosomal membrane</keyword>
<keyword id="KW-1168">Fusion of virus membrane with host membrane</keyword>
<keyword id="KW-0325">Glycoprotein</keyword>
<keyword id="KW-0945">Host-virus interaction</keyword>
<keyword id="KW-0449">Lipoprotein</keyword>
<keyword id="KW-0472">Membrane</keyword>
<keyword id="KW-0519">Myristate</keyword>
<keyword id="KW-1185">Reference proteome</keyword>
<keyword id="KW-0812">Transmembrane</keyword>
<keyword id="KW-1133">Transmembrane helix</keyword>
<keyword id="KW-1161">Viral attachment to host cell</keyword>
<keyword id="KW-0261">Viral envelope protein</keyword>
<keyword id="KW-1162">Viral penetration into host cytoplasm</keyword>
<keyword id="KW-0946">Virion</keyword>
<keyword id="KW-1164">Virus endocytosis by host</keyword>
<keyword id="KW-1160">Virus entry into host cell</keyword>